<feature type="chain" id="PRO_1000045762" description="Adenosylcobinamide-GDP ribazoletransferase">
    <location>
        <begin position="1"/>
        <end position="252"/>
    </location>
</feature>
<feature type="transmembrane region" description="Helical" evidence="1">
    <location>
        <begin position="29"/>
        <end position="49"/>
    </location>
</feature>
<feature type="transmembrane region" description="Helical" evidence="1">
    <location>
        <begin position="50"/>
        <end position="70"/>
    </location>
</feature>
<feature type="transmembrane region" description="Helical" evidence="1">
    <location>
        <begin position="104"/>
        <end position="124"/>
    </location>
</feature>
<feature type="transmembrane region" description="Helical" evidence="1">
    <location>
        <begin position="129"/>
        <end position="149"/>
    </location>
</feature>
<feature type="transmembrane region" description="Helical" evidence="1">
    <location>
        <begin position="166"/>
        <end position="186"/>
    </location>
</feature>
<feature type="transmembrane region" description="Helical" evidence="1">
    <location>
        <begin position="194"/>
        <end position="214"/>
    </location>
</feature>
<keyword id="KW-0997">Cell inner membrane</keyword>
<keyword id="KW-1003">Cell membrane</keyword>
<keyword id="KW-0169">Cobalamin biosynthesis</keyword>
<keyword id="KW-0460">Magnesium</keyword>
<keyword id="KW-0472">Membrane</keyword>
<keyword id="KW-0808">Transferase</keyword>
<keyword id="KW-0812">Transmembrane</keyword>
<keyword id="KW-1133">Transmembrane helix</keyword>
<evidence type="ECO:0000255" key="1">
    <source>
        <dbReference type="HAMAP-Rule" id="MF_00719"/>
    </source>
</evidence>
<dbReference type="EC" id="2.7.8.26" evidence="1"/>
<dbReference type="EMBL" id="CP000108">
    <property type="protein sequence ID" value="ABB28319.1"/>
    <property type="molecule type" value="Genomic_DNA"/>
</dbReference>
<dbReference type="STRING" id="340177.Cag_1057"/>
<dbReference type="KEGG" id="cch:Cag_1057"/>
<dbReference type="eggNOG" id="COG0368">
    <property type="taxonomic scope" value="Bacteria"/>
</dbReference>
<dbReference type="HOGENOM" id="CLU_057426_1_0_10"/>
<dbReference type="OrthoDB" id="9794626at2"/>
<dbReference type="UniPathway" id="UPA00148">
    <property type="reaction ID" value="UER00238"/>
</dbReference>
<dbReference type="GO" id="GO:0005886">
    <property type="term" value="C:plasma membrane"/>
    <property type="evidence" value="ECO:0007669"/>
    <property type="project" value="UniProtKB-SubCell"/>
</dbReference>
<dbReference type="GO" id="GO:0051073">
    <property type="term" value="F:adenosylcobinamide-GDP ribazoletransferase activity"/>
    <property type="evidence" value="ECO:0007669"/>
    <property type="project" value="UniProtKB-UniRule"/>
</dbReference>
<dbReference type="GO" id="GO:0008818">
    <property type="term" value="F:cobalamin 5'-phosphate synthase activity"/>
    <property type="evidence" value="ECO:0007669"/>
    <property type="project" value="UniProtKB-UniRule"/>
</dbReference>
<dbReference type="GO" id="GO:0009236">
    <property type="term" value="P:cobalamin biosynthetic process"/>
    <property type="evidence" value="ECO:0007669"/>
    <property type="project" value="UniProtKB-UniRule"/>
</dbReference>
<dbReference type="HAMAP" id="MF_00719">
    <property type="entry name" value="CobS"/>
    <property type="match status" value="1"/>
</dbReference>
<dbReference type="InterPro" id="IPR003805">
    <property type="entry name" value="CobS"/>
</dbReference>
<dbReference type="NCBIfam" id="TIGR00317">
    <property type="entry name" value="cobS"/>
    <property type="match status" value="1"/>
</dbReference>
<dbReference type="PANTHER" id="PTHR34148">
    <property type="entry name" value="ADENOSYLCOBINAMIDE-GDP RIBAZOLETRANSFERASE"/>
    <property type="match status" value="1"/>
</dbReference>
<dbReference type="PANTHER" id="PTHR34148:SF1">
    <property type="entry name" value="ADENOSYLCOBINAMIDE-GDP RIBAZOLETRANSFERASE"/>
    <property type="match status" value="1"/>
</dbReference>
<dbReference type="Pfam" id="PF02654">
    <property type="entry name" value="CobS"/>
    <property type="match status" value="1"/>
</dbReference>
<name>COBS_CHLCH</name>
<proteinExistence type="inferred from homology"/>
<protein>
    <recommendedName>
        <fullName evidence="1">Adenosylcobinamide-GDP ribazoletransferase</fullName>
        <ecNumber evidence="1">2.7.8.26</ecNumber>
    </recommendedName>
    <alternativeName>
        <fullName evidence="1">Cobalamin synthase</fullName>
    </alternativeName>
    <alternativeName>
        <fullName evidence="1">Cobalamin-5'-phosphate synthase</fullName>
    </alternativeName>
</protein>
<gene>
    <name evidence="1" type="primary">cobS</name>
    <name type="ordered locus">Cag_1057</name>
</gene>
<organism>
    <name type="scientific">Chlorobium chlorochromatii (strain CaD3)</name>
    <dbReference type="NCBI Taxonomy" id="340177"/>
    <lineage>
        <taxon>Bacteria</taxon>
        <taxon>Pseudomonadati</taxon>
        <taxon>Chlorobiota</taxon>
        <taxon>Chlorobiia</taxon>
        <taxon>Chlorobiales</taxon>
        <taxon>Chlorobiaceae</taxon>
        <taxon>Chlorobium/Pelodictyon group</taxon>
        <taxon>Chlorobium</taxon>
    </lineage>
</organism>
<comment type="function">
    <text evidence="1">Joins adenosylcobinamide-GDP and alpha-ribazole to generate adenosylcobalamin (Ado-cobalamin). Also synthesizes adenosylcobalamin 5'-phosphate from adenosylcobinamide-GDP and alpha-ribazole 5'-phosphate.</text>
</comment>
<comment type="catalytic activity">
    <reaction evidence="1">
        <text>alpha-ribazole + adenosylcob(III)inamide-GDP = adenosylcob(III)alamin + GMP + H(+)</text>
        <dbReference type="Rhea" id="RHEA:16049"/>
        <dbReference type="ChEBI" id="CHEBI:10329"/>
        <dbReference type="ChEBI" id="CHEBI:15378"/>
        <dbReference type="ChEBI" id="CHEBI:18408"/>
        <dbReference type="ChEBI" id="CHEBI:58115"/>
        <dbReference type="ChEBI" id="CHEBI:60487"/>
        <dbReference type="EC" id="2.7.8.26"/>
    </reaction>
</comment>
<comment type="catalytic activity">
    <reaction evidence="1">
        <text>alpha-ribazole 5'-phosphate + adenosylcob(III)inamide-GDP = adenosylcob(III)alamin 5'-phosphate + GMP + H(+)</text>
        <dbReference type="Rhea" id="RHEA:23560"/>
        <dbReference type="ChEBI" id="CHEBI:15378"/>
        <dbReference type="ChEBI" id="CHEBI:57918"/>
        <dbReference type="ChEBI" id="CHEBI:58115"/>
        <dbReference type="ChEBI" id="CHEBI:60487"/>
        <dbReference type="ChEBI" id="CHEBI:60493"/>
        <dbReference type="EC" id="2.7.8.26"/>
    </reaction>
</comment>
<comment type="cofactor">
    <cofactor evidence="1">
        <name>Mg(2+)</name>
        <dbReference type="ChEBI" id="CHEBI:18420"/>
    </cofactor>
</comment>
<comment type="pathway">
    <text evidence="1">Cofactor biosynthesis; adenosylcobalamin biosynthesis; adenosylcobalamin from cob(II)yrinate a,c-diamide: step 7/7.</text>
</comment>
<comment type="subcellular location">
    <subcellularLocation>
        <location evidence="1">Cell inner membrane</location>
        <topology evidence="1">Multi-pass membrane protein</topology>
    </subcellularLocation>
</comment>
<comment type="similarity">
    <text evidence="1">Belongs to the CobS family.</text>
</comment>
<reference key="1">
    <citation type="submission" date="2005-08" db="EMBL/GenBank/DDBJ databases">
        <title>Complete sequence of Chlorobium chlorochromatii CaD3.</title>
        <authorList>
            <consortium name="US DOE Joint Genome Institute"/>
            <person name="Copeland A."/>
            <person name="Lucas S."/>
            <person name="Lapidus A."/>
            <person name="Barry K."/>
            <person name="Detter J.C."/>
            <person name="Glavina T."/>
            <person name="Hammon N."/>
            <person name="Israni S."/>
            <person name="Pitluck S."/>
            <person name="Bryant D."/>
            <person name="Schmutz J."/>
            <person name="Larimer F."/>
            <person name="Land M."/>
            <person name="Kyrpides N."/>
            <person name="Ivanova N."/>
            <person name="Richardson P."/>
        </authorList>
    </citation>
    <scope>NUCLEOTIDE SEQUENCE [LARGE SCALE GENOMIC DNA]</scope>
    <source>
        <strain>CaD3</strain>
    </source>
</reference>
<sequence length="252" mass="26317">MLGGLVTALRTLTILPIPGKDAVTFSHSLYWFPFVGLLLGALLAALGYVGSLSGWHEFAALLVVLGGIVLTRGMHADGLADVADGFWGGRSKEAALRIMKDPTVGSFGALALSGVMLLKWVAVVRLLSFGLFDVVMAGILLARLVQVLLASALPYARREAGTASAFVAGAGAPHAFSALLFTLALLFPFYTENFPTMLWLLGAALVAGSMVGMVSYRKIGGVTGDVLGAGSELTEVAVWITGALLLSDYLLF</sequence>
<accession>Q3ARQ6</accession>